<keyword id="KW-0067">ATP-binding</keyword>
<keyword id="KW-0963">Cytoplasm</keyword>
<keyword id="KW-0418">Kinase</keyword>
<keyword id="KW-0547">Nucleotide-binding</keyword>
<keyword id="KW-1185">Reference proteome</keyword>
<keyword id="KW-0808">Transferase</keyword>
<sequence length="229" mass="26345">MNENVIALDGPAGSGKSTVARQIAEKIGFNYLDTGAFYRALTLYLFRLYQTSPNNRFEEWVKTSEAERSLSQIRIVCEFSAGNENRILLDGEDVSLAIRTPEITREIKHIANRRIYRDFVNKELHSLAKLHKLIMDGRDIGTEVFPDAKFKFYLTASSKVRAERRFLQLQEQGIFADRNEIEKEIILRDKSDMEREIAPLYQAKDAILIDTDILSKNSVISKILEILDQ</sequence>
<protein>
    <recommendedName>
        <fullName evidence="1">Cytidylate kinase</fullName>
        <shortName evidence="1">CK</shortName>
        <ecNumber evidence="1">2.7.4.25</ecNumber>
    </recommendedName>
    <alternativeName>
        <fullName evidence="1">Cytidine monophosphate kinase</fullName>
        <shortName evidence="1">CMP kinase</shortName>
    </alternativeName>
</protein>
<gene>
    <name evidence="1" type="primary">cmk</name>
    <name type="ordered locus">LA_1259</name>
</gene>
<evidence type="ECO:0000255" key="1">
    <source>
        <dbReference type="HAMAP-Rule" id="MF_00238"/>
    </source>
</evidence>
<proteinExistence type="inferred from homology"/>
<accession>Q8F6P4</accession>
<name>KCY_LEPIN</name>
<organism>
    <name type="scientific">Leptospira interrogans serogroup Icterohaemorrhagiae serovar Lai (strain 56601)</name>
    <dbReference type="NCBI Taxonomy" id="189518"/>
    <lineage>
        <taxon>Bacteria</taxon>
        <taxon>Pseudomonadati</taxon>
        <taxon>Spirochaetota</taxon>
        <taxon>Spirochaetia</taxon>
        <taxon>Leptospirales</taxon>
        <taxon>Leptospiraceae</taxon>
        <taxon>Leptospira</taxon>
    </lineage>
</organism>
<feature type="chain" id="PRO_0000131927" description="Cytidylate kinase">
    <location>
        <begin position="1"/>
        <end position="229"/>
    </location>
</feature>
<feature type="binding site" evidence="1">
    <location>
        <begin position="10"/>
        <end position="18"/>
    </location>
    <ligand>
        <name>ATP</name>
        <dbReference type="ChEBI" id="CHEBI:30616"/>
    </ligand>
</feature>
<reference key="1">
    <citation type="journal article" date="2003" name="Nature">
        <title>Unique physiological and pathogenic features of Leptospira interrogans revealed by whole-genome sequencing.</title>
        <authorList>
            <person name="Ren S.-X."/>
            <person name="Fu G."/>
            <person name="Jiang X.-G."/>
            <person name="Zeng R."/>
            <person name="Miao Y.-G."/>
            <person name="Xu H."/>
            <person name="Zhang Y.-X."/>
            <person name="Xiong H."/>
            <person name="Lu G."/>
            <person name="Lu L.-F."/>
            <person name="Jiang H.-Q."/>
            <person name="Jia J."/>
            <person name="Tu Y.-F."/>
            <person name="Jiang J.-X."/>
            <person name="Gu W.-Y."/>
            <person name="Zhang Y.-Q."/>
            <person name="Cai Z."/>
            <person name="Sheng H.-H."/>
            <person name="Yin H.-F."/>
            <person name="Zhang Y."/>
            <person name="Zhu G.-F."/>
            <person name="Wan M."/>
            <person name="Huang H.-L."/>
            <person name="Qian Z."/>
            <person name="Wang S.-Y."/>
            <person name="Ma W."/>
            <person name="Yao Z.-J."/>
            <person name="Shen Y."/>
            <person name="Qiang B.-Q."/>
            <person name="Xia Q.-C."/>
            <person name="Guo X.-K."/>
            <person name="Danchin A."/>
            <person name="Saint Girons I."/>
            <person name="Somerville R.L."/>
            <person name="Wen Y.-M."/>
            <person name="Shi M.-H."/>
            <person name="Chen Z."/>
            <person name="Xu J.-G."/>
            <person name="Zhao G.-P."/>
        </authorList>
    </citation>
    <scope>NUCLEOTIDE SEQUENCE [LARGE SCALE GENOMIC DNA]</scope>
    <source>
        <strain>56601</strain>
    </source>
</reference>
<dbReference type="EC" id="2.7.4.25" evidence="1"/>
<dbReference type="EMBL" id="AE010300">
    <property type="protein sequence ID" value="AAN48458.2"/>
    <property type="molecule type" value="Genomic_DNA"/>
</dbReference>
<dbReference type="RefSeq" id="NP_711440.2">
    <property type="nucleotide sequence ID" value="NC_004342.2"/>
</dbReference>
<dbReference type="RefSeq" id="WP_001005055.1">
    <property type="nucleotide sequence ID" value="NC_004342.2"/>
</dbReference>
<dbReference type="SMR" id="Q8F6P4"/>
<dbReference type="FunCoup" id="Q8F6P4">
    <property type="interactions" value="314"/>
</dbReference>
<dbReference type="STRING" id="189518.LA_1259"/>
<dbReference type="PaxDb" id="189518-LA_1259"/>
<dbReference type="EnsemblBacteria" id="AAN48458">
    <property type="protein sequence ID" value="AAN48458"/>
    <property type="gene ID" value="LA_1259"/>
</dbReference>
<dbReference type="GeneID" id="61142325"/>
<dbReference type="KEGG" id="lil:LA_1259"/>
<dbReference type="PATRIC" id="fig|189518.3.peg.1260"/>
<dbReference type="HOGENOM" id="CLU_079959_0_2_12"/>
<dbReference type="InParanoid" id="Q8F6P4"/>
<dbReference type="OrthoDB" id="9807434at2"/>
<dbReference type="Proteomes" id="UP000001408">
    <property type="component" value="Chromosome I"/>
</dbReference>
<dbReference type="GO" id="GO:0005829">
    <property type="term" value="C:cytosol"/>
    <property type="evidence" value="ECO:0000318"/>
    <property type="project" value="GO_Central"/>
</dbReference>
<dbReference type="GO" id="GO:0004127">
    <property type="term" value="F:(d)CMP kinase activity"/>
    <property type="evidence" value="ECO:0000318"/>
    <property type="project" value="GO_Central"/>
</dbReference>
<dbReference type="GO" id="GO:0005524">
    <property type="term" value="F:ATP binding"/>
    <property type="evidence" value="ECO:0007669"/>
    <property type="project" value="UniProtKB-UniRule"/>
</dbReference>
<dbReference type="GO" id="GO:0036430">
    <property type="term" value="F:CMP kinase activity"/>
    <property type="evidence" value="ECO:0007669"/>
    <property type="project" value="RHEA"/>
</dbReference>
<dbReference type="GO" id="GO:0036431">
    <property type="term" value="F:dCMP kinase activity"/>
    <property type="evidence" value="ECO:0007669"/>
    <property type="project" value="RHEA"/>
</dbReference>
<dbReference type="GO" id="GO:0015949">
    <property type="term" value="P:nucleobase-containing small molecule interconversion"/>
    <property type="evidence" value="ECO:0000318"/>
    <property type="project" value="GO_Central"/>
</dbReference>
<dbReference type="GO" id="GO:0006220">
    <property type="term" value="P:pyrimidine nucleotide metabolic process"/>
    <property type="evidence" value="ECO:0007669"/>
    <property type="project" value="UniProtKB-UniRule"/>
</dbReference>
<dbReference type="CDD" id="cd02020">
    <property type="entry name" value="CMPK"/>
    <property type="match status" value="1"/>
</dbReference>
<dbReference type="FunFam" id="3.40.50.300:FF:001608">
    <property type="entry name" value="Cytidylate kinase"/>
    <property type="match status" value="1"/>
</dbReference>
<dbReference type="Gene3D" id="3.40.50.300">
    <property type="entry name" value="P-loop containing nucleotide triphosphate hydrolases"/>
    <property type="match status" value="1"/>
</dbReference>
<dbReference type="HAMAP" id="MF_00238">
    <property type="entry name" value="Cytidyl_kinase_type1"/>
    <property type="match status" value="1"/>
</dbReference>
<dbReference type="InterPro" id="IPR003136">
    <property type="entry name" value="Cytidylate_kin"/>
</dbReference>
<dbReference type="InterPro" id="IPR011994">
    <property type="entry name" value="Cytidylate_kinase_dom"/>
</dbReference>
<dbReference type="InterPro" id="IPR027417">
    <property type="entry name" value="P-loop_NTPase"/>
</dbReference>
<dbReference type="NCBIfam" id="TIGR00017">
    <property type="entry name" value="cmk"/>
    <property type="match status" value="1"/>
</dbReference>
<dbReference type="PANTHER" id="PTHR21299:SF2">
    <property type="entry name" value="CYTIDYLATE KINASE"/>
    <property type="match status" value="1"/>
</dbReference>
<dbReference type="PANTHER" id="PTHR21299">
    <property type="entry name" value="CYTIDYLATE KINASE/PANTOATE-BETA-ALANINE LIGASE"/>
    <property type="match status" value="1"/>
</dbReference>
<dbReference type="Pfam" id="PF02224">
    <property type="entry name" value="Cytidylate_kin"/>
    <property type="match status" value="1"/>
</dbReference>
<dbReference type="SUPFAM" id="SSF52540">
    <property type="entry name" value="P-loop containing nucleoside triphosphate hydrolases"/>
    <property type="match status" value="1"/>
</dbReference>
<comment type="catalytic activity">
    <reaction evidence="1">
        <text>CMP + ATP = CDP + ADP</text>
        <dbReference type="Rhea" id="RHEA:11600"/>
        <dbReference type="ChEBI" id="CHEBI:30616"/>
        <dbReference type="ChEBI" id="CHEBI:58069"/>
        <dbReference type="ChEBI" id="CHEBI:60377"/>
        <dbReference type="ChEBI" id="CHEBI:456216"/>
        <dbReference type="EC" id="2.7.4.25"/>
    </reaction>
</comment>
<comment type="catalytic activity">
    <reaction evidence="1">
        <text>dCMP + ATP = dCDP + ADP</text>
        <dbReference type="Rhea" id="RHEA:25094"/>
        <dbReference type="ChEBI" id="CHEBI:30616"/>
        <dbReference type="ChEBI" id="CHEBI:57566"/>
        <dbReference type="ChEBI" id="CHEBI:58593"/>
        <dbReference type="ChEBI" id="CHEBI:456216"/>
        <dbReference type="EC" id="2.7.4.25"/>
    </reaction>
</comment>
<comment type="subcellular location">
    <subcellularLocation>
        <location evidence="1">Cytoplasm</location>
    </subcellularLocation>
</comment>
<comment type="similarity">
    <text evidence="1">Belongs to the cytidylate kinase family. Type 1 subfamily.</text>
</comment>